<feature type="chain" id="PRO_0000214840" description="N-acetylmuramic acid 6-phosphate etherase">
    <location>
        <begin position="1"/>
        <end position="306"/>
    </location>
</feature>
<feature type="domain" description="SIS" evidence="1">
    <location>
        <begin position="55"/>
        <end position="218"/>
    </location>
</feature>
<feature type="active site" description="Proton donor" evidence="1">
    <location>
        <position position="83"/>
    </location>
</feature>
<feature type="active site" evidence="1">
    <location>
        <position position="114"/>
    </location>
</feature>
<protein>
    <recommendedName>
        <fullName evidence="1">N-acetylmuramic acid 6-phosphate etherase</fullName>
        <shortName evidence="1">MurNAc-6-P etherase</shortName>
        <ecNumber evidence="1">4.2.1.126</ecNumber>
    </recommendedName>
    <alternativeName>
        <fullName evidence="1">N-acetylmuramic acid 6-phosphate hydrolase</fullName>
    </alternativeName>
    <alternativeName>
        <fullName evidence="1">N-acetylmuramic acid 6-phosphate lyase</fullName>
    </alternativeName>
</protein>
<keyword id="KW-0119">Carbohydrate metabolism</keyword>
<keyword id="KW-0456">Lyase</keyword>
<keyword id="KW-1185">Reference proteome</keyword>
<accession>Q8RD35</accession>
<organism>
    <name type="scientific">Caldanaerobacter subterraneus subsp. tengcongensis (strain DSM 15242 / JCM 11007 / NBRC 100824 / MB4)</name>
    <name type="common">Thermoanaerobacter tengcongensis</name>
    <dbReference type="NCBI Taxonomy" id="273068"/>
    <lineage>
        <taxon>Bacteria</taxon>
        <taxon>Bacillati</taxon>
        <taxon>Bacillota</taxon>
        <taxon>Clostridia</taxon>
        <taxon>Thermoanaerobacterales</taxon>
        <taxon>Thermoanaerobacteraceae</taxon>
        <taxon>Caldanaerobacter</taxon>
    </lineage>
</organism>
<proteinExistence type="inferred from homology"/>
<sequence length="306" mass="33209">MTLEELITEGRNPNTMDIDRLSTVDMLKKINEEDKKVPLAVEKVIPSIAEAIDRIVPRMKKGGRLIYVGAGTSGRIGILDASECPPTFGVDPGLVVGIIAGGDSAIRNAIESAEDDVEGGRQDLVNINLTERDSVIGISASGRTPYVIGALRYAKEVGALTIGLFCNENKNVENIVDVMITPIVGPEVIMGSTRMKAGTAQKLVLNMISTGVMIKLGKVYSNLMVDLQASNEKLRERARRMVKLATGAKEDLIERVLNETNYNVKLAILMIVGDMEKEKAQKLLEMADGYIAEAIKLKDLVLQGEE</sequence>
<gene>
    <name evidence="1" type="primary">murQ</name>
    <name type="ordered locus">TTE0212</name>
</gene>
<comment type="function">
    <text evidence="1">Specifically catalyzes the cleavage of the D-lactyl ether substituent of MurNAc 6-phosphate, producing GlcNAc 6-phosphate and D-lactate.</text>
</comment>
<comment type="catalytic activity">
    <reaction evidence="1">
        <text>N-acetyl-D-muramate 6-phosphate + H2O = N-acetyl-D-glucosamine 6-phosphate + (R)-lactate</text>
        <dbReference type="Rhea" id="RHEA:26410"/>
        <dbReference type="ChEBI" id="CHEBI:15377"/>
        <dbReference type="ChEBI" id="CHEBI:16004"/>
        <dbReference type="ChEBI" id="CHEBI:57513"/>
        <dbReference type="ChEBI" id="CHEBI:58722"/>
        <dbReference type="EC" id="4.2.1.126"/>
    </reaction>
</comment>
<comment type="pathway">
    <text evidence="1">Amino-sugar metabolism; N-acetylmuramate degradation.</text>
</comment>
<comment type="subunit">
    <text evidence="1">Homodimer.</text>
</comment>
<comment type="miscellaneous">
    <text evidence="1">A lyase-type mechanism (elimination/hydration) is suggested for the cleavage of the lactyl ether bond of MurNAc 6-phosphate, with the formation of an alpha,beta-unsaturated aldehyde intermediate with (E)-stereochemistry, followed by the syn addition of water to give product.</text>
</comment>
<comment type="similarity">
    <text evidence="1">Belongs to the GCKR-like family. MurNAc-6-P etherase subfamily.</text>
</comment>
<dbReference type="EC" id="4.2.1.126" evidence="1"/>
<dbReference type="EMBL" id="AE008691">
    <property type="protein sequence ID" value="AAM23513.1"/>
    <property type="molecule type" value="Genomic_DNA"/>
</dbReference>
<dbReference type="RefSeq" id="WP_009609599.1">
    <property type="nucleotide sequence ID" value="NC_003869.1"/>
</dbReference>
<dbReference type="SMR" id="Q8RD35"/>
<dbReference type="STRING" id="273068.TTE0212"/>
<dbReference type="KEGG" id="tte:TTE0212"/>
<dbReference type="eggNOG" id="COG2103">
    <property type="taxonomic scope" value="Bacteria"/>
</dbReference>
<dbReference type="HOGENOM" id="CLU_049049_1_1_9"/>
<dbReference type="OrthoDB" id="9813395at2"/>
<dbReference type="UniPathway" id="UPA00342"/>
<dbReference type="Proteomes" id="UP000000555">
    <property type="component" value="Chromosome"/>
</dbReference>
<dbReference type="GO" id="GO:0097367">
    <property type="term" value="F:carbohydrate derivative binding"/>
    <property type="evidence" value="ECO:0007669"/>
    <property type="project" value="InterPro"/>
</dbReference>
<dbReference type="GO" id="GO:0016835">
    <property type="term" value="F:carbon-oxygen lyase activity"/>
    <property type="evidence" value="ECO:0007669"/>
    <property type="project" value="UniProtKB-UniRule"/>
</dbReference>
<dbReference type="GO" id="GO:0016803">
    <property type="term" value="F:ether hydrolase activity"/>
    <property type="evidence" value="ECO:0007669"/>
    <property type="project" value="TreeGrafter"/>
</dbReference>
<dbReference type="GO" id="GO:0046348">
    <property type="term" value="P:amino sugar catabolic process"/>
    <property type="evidence" value="ECO:0007669"/>
    <property type="project" value="InterPro"/>
</dbReference>
<dbReference type="GO" id="GO:0097173">
    <property type="term" value="P:N-acetylmuramic acid catabolic process"/>
    <property type="evidence" value="ECO:0007669"/>
    <property type="project" value="UniProtKB-UniPathway"/>
</dbReference>
<dbReference type="GO" id="GO:0009254">
    <property type="term" value="P:peptidoglycan turnover"/>
    <property type="evidence" value="ECO:0007669"/>
    <property type="project" value="TreeGrafter"/>
</dbReference>
<dbReference type="CDD" id="cd05007">
    <property type="entry name" value="SIS_Etherase"/>
    <property type="match status" value="1"/>
</dbReference>
<dbReference type="FunFam" id="1.10.8.1080:FF:000001">
    <property type="entry name" value="N-acetylmuramic acid 6-phosphate etherase"/>
    <property type="match status" value="1"/>
</dbReference>
<dbReference type="FunFam" id="3.40.50.10490:FF:000014">
    <property type="entry name" value="N-acetylmuramic acid 6-phosphate etherase"/>
    <property type="match status" value="1"/>
</dbReference>
<dbReference type="Gene3D" id="1.10.8.1080">
    <property type="match status" value="1"/>
</dbReference>
<dbReference type="Gene3D" id="3.40.50.10490">
    <property type="entry name" value="Glucose-6-phosphate isomerase like protein, domain 1"/>
    <property type="match status" value="1"/>
</dbReference>
<dbReference type="HAMAP" id="MF_00068">
    <property type="entry name" value="MurQ"/>
    <property type="match status" value="1"/>
</dbReference>
<dbReference type="InterPro" id="IPR005488">
    <property type="entry name" value="Etherase_MurQ"/>
</dbReference>
<dbReference type="InterPro" id="IPR005486">
    <property type="entry name" value="Glucokinase_regulatory_CS"/>
</dbReference>
<dbReference type="InterPro" id="IPR040190">
    <property type="entry name" value="MURQ/GCKR"/>
</dbReference>
<dbReference type="InterPro" id="IPR001347">
    <property type="entry name" value="SIS_dom"/>
</dbReference>
<dbReference type="InterPro" id="IPR046348">
    <property type="entry name" value="SIS_dom_sf"/>
</dbReference>
<dbReference type="NCBIfam" id="TIGR00274">
    <property type="entry name" value="N-acetylmuramic acid 6-phosphate etherase"/>
    <property type="match status" value="1"/>
</dbReference>
<dbReference type="NCBIfam" id="NF003915">
    <property type="entry name" value="PRK05441.1"/>
    <property type="match status" value="1"/>
</dbReference>
<dbReference type="NCBIfam" id="NF009222">
    <property type="entry name" value="PRK12570.1"/>
    <property type="match status" value="1"/>
</dbReference>
<dbReference type="PANTHER" id="PTHR10088">
    <property type="entry name" value="GLUCOKINASE REGULATORY PROTEIN"/>
    <property type="match status" value="1"/>
</dbReference>
<dbReference type="PANTHER" id="PTHR10088:SF4">
    <property type="entry name" value="GLUCOKINASE REGULATORY PROTEIN"/>
    <property type="match status" value="1"/>
</dbReference>
<dbReference type="Pfam" id="PF22645">
    <property type="entry name" value="GKRP_SIS_N"/>
    <property type="match status" value="1"/>
</dbReference>
<dbReference type="SUPFAM" id="SSF53697">
    <property type="entry name" value="SIS domain"/>
    <property type="match status" value="1"/>
</dbReference>
<dbReference type="PROSITE" id="PS01272">
    <property type="entry name" value="GCKR"/>
    <property type="match status" value="1"/>
</dbReference>
<dbReference type="PROSITE" id="PS51464">
    <property type="entry name" value="SIS"/>
    <property type="match status" value="1"/>
</dbReference>
<name>MURQ_CALS4</name>
<evidence type="ECO:0000255" key="1">
    <source>
        <dbReference type="HAMAP-Rule" id="MF_00068"/>
    </source>
</evidence>
<reference key="1">
    <citation type="journal article" date="2002" name="Genome Res.">
        <title>A complete sequence of the T. tengcongensis genome.</title>
        <authorList>
            <person name="Bao Q."/>
            <person name="Tian Y."/>
            <person name="Li W."/>
            <person name="Xu Z."/>
            <person name="Xuan Z."/>
            <person name="Hu S."/>
            <person name="Dong W."/>
            <person name="Yang J."/>
            <person name="Chen Y."/>
            <person name="Xue Y."/>
            <person name="Xu Y."/>
            <person name="Lai X."/>
            <person name="Huang L."/>
            <person name="Dong X."/>
            <person name="Ma Y."/>
            <person name="Ling L."/>
            <person name="Tan H."/>
            <person name="Chen R."/>
            <person name="Wang J."/>
            <person name="Yu J."/>
            <person name="Yang H."/>
        </authorList>
    </citation>
    <scope>NUCLEOTIDE SEQUENCE [LARGE SCALE GENOMIC DNA]</scope>
    <source>
        <strain>DSM 15242 / JCM 11007 / NBRC 100824 / MB4</strain>
    </source>
</reference>